<gene>
    <name evidence="1" type="primary">argS</name>
    <name type="ordered locus">Spro_2791</name>
</gene>
<reference key="1">
    <citation type="submission" date="2007-09" db="EMBL/GenBank/DDBJ databases">
        <title>Complete sequence of chromosome of Serratia proteamaculans 568.</title>
        <authorList>
            <consortium name="US DOE Joint Genome Institute"/>
            <person name="Copeland A."/>
            <person name="Lucas S."/>
            <person name="Lapidus A."/>
            <person name="Barry K."/>
            <person name="Glavina del Rio T."/>
            <person name="Dalin E."/>
            <person name="Tice H."/>
            <person name="Pitluck S."/>
            <person name="Chain P."/>
            <person name="Malfatti S."/>
            <person name="Shin M."/>
            <person name="Vergez L."/>
            <person name="Schmutz J."/>
            <person name="Larimer F."/>
            <person name="Land M."/>
            <person name="Hauser L."/>
            <person name="Kyrpides N."/>
            <person name="Kim E."/>
            <person name="Taghavi S."/>
            <person name="Newman L."/>
            <person name="Vangronsveld J."/>
            <person name="van der Lelie D."/>
            <person name="Richardson P."/>
        </authorList>
    </citation>
    <scope>NUCLEOTIDE SEQUENCE [LARGE SCALE GENOMIC DNA]</scope>
    <source>
        <strain>568</strain>
    </source>
</reference>
<protein>
    <recommendedName>
        <fullName evidence="1">Arginine--tRNA ligase</fullName>
        <ecNumber evidence="1">6.1.1.19</ecNumber>
    </recommendedName>
    <alternativeName>
        <fullName evidence="1">Arginyl-tRNA synthetase</fullName>
        <shortName evidence="1">ArgRS</shortName>
    </alternativeName>
</protein>
<proteinExistence type="inferred from homology"/>
<feature type="chain" id="PRO_1000057812" description="Arginine--tRNA ligase">
    <location>
        <begin position="1"/>
        <end position="576"/>
    </location>
</feature>
<feature type="short sequence motif" description="'HIGH' region">
    <location>
        <begin position="122"/>
        <end position="132"/>
    </location>
</feature>
<accession>A8GFK2</accession>
<evidence type="ECO:0000255" key="1">
    <source>
        <dbReference type="HAMAP-Rule" id="MF_00123"/>
    </source>
</evidence>
<dbReference type="EC" id="6.1.1.19" evidence="1"/>
<dbReference type="EMBL" id="CP000826">
    <property type="protein sequence ID" value="ABV41892.1"/>
    <property type="molecule type" value="Genomic_DNA"/>
</dbReference>
<dbReference type="SMR" id="A8GFK2"/>
<dbReference type="STRING" id="399741.Spro_2791"/>
<dbReference type="KEGG" id="spe:Spro_2791"/>
<dbReference type="eggNOG" id="COG0018">
    <property type="taxonomic scope" value="Bacteria"/>
</dbReference>
<dbReference type="HOGENOM" id="CLU_006406_5_1_6"/>
<dbReference type="OrthoDB" id="9803211at2"/>
<dbReference type="GO" id="GO:0005737">
    <property type="term" value="C:cytoplasm"/>
    <property type="evidence" value="ECO:0007669"/>
    <property type="project" value="UniProtKB-SubCell"/>
</dbReference>
<dbReference type="GO" id="GO:0004814">
    <property type="term" value="F:arginine-tRNA ligase activity"/>
    <property type="evidence" value="ECO:0007669"/>
    <property type="project" value="UniProtKB-UniRule"/>
</dbReference>
<dbReference type="GO" id="GO:0005524">
    <property type="term" value="F:ATP binding"/>
    <property type="evidence" value="ECO:0007669"/>
    <property type="project" value="UniProtKB-UniRule"/>
</dbReference>
<dbReference type="GO" id="GO:0006420">
    <property type="term" value="P:arginyl-tRNA aminoacylation"/>
    <property type="evidence" value="ECO:0007669"/>
    <property type="project" value="UniProtKB-UniRule"/>
</dbReference>
<dbReference type="CDD" id="cd07956">
    <property type="entry name" value="Anticodon_Ia_Arg"/>
    <property type="match status" value="1"/>
</dbReference>
<dbReference type="CDD" id="cd00671">
    <property type="entry name" value="ArgRS_core"/>
    <property type="match status" value="1"/>
</dbReference>
<dbReference type="FunFam" id="1.10.730.10:FF:000001">
    <property type="entry name" value="Arginine--tRNA ligase"/>
    <property type="match status" value="1"/>
</dbReference>
<dbReference type="FunFam" id="3.30.1360.70:FF:000001">
    <property type="entry name" value="Arginine--tRNA ligase"/>
    <property type="match status" value="1"/>
</dbReference>
<dbReference type="FunFam" id="3.40.50.620:FF:000030">
    <property type="entry name" value="Arginine--tRNA ligase"/>
    <property type="match status" value="1"/>
</dbReference>
<dbReference type="Gene3D" id="3.30.1360.70">
    <property type="entry name" value="Arginyl tRNA synthetase N-terminal domain"/>
    <property type="match status" value="1"/>
</dbReference>
<dbReference type="Gene3D" id="3.40.50.620">
    <property type="entry name" value="HUPs"/>
    <property type="match status" value="1"/>
</dbReference>
<dbReference type="Gene3D" id="1.10.730.10">
    <property type="entry name" value="Isoleucyl-tRNA Synthetase, Domain 1"/>
    <property type="match status" value="1"/>
</dbReference>
<dbReference type="HAMAP" id="MF_00123">
    <property type="entry name" value="Arg_tRNA_synth"/>
    <property type="match status" value="1"/>
</dbReference>
<dbReference type="InterPro" id="IPR001412">
    <property type="entry name" value="aa-tRNA-synth_I_CS"/>
</dbReference>
<dbReference type="InterPro" id="IPR001278">
    <property type="entry name" value="Arg-tRNA-ligase"/>
</dbReference>
<dbReference type="InterPro" id="IPR005148">
    <property type="entry name" value="Arg-tRNA-synth_N"/>
</dbReference>
<dbReference type="InterPro" id="IPR036695">
    <property type="entry name" value="Arg-tRNA-synth_N_sf"/>
</dbReference>
<dbReference type="InterPro" id="IPR035684">
    <property type="entry name" value="ArgRS_core"/>
</dbReference>
<dbReference type="InterPro" id="IPR008909">
    <property type="entry name" value="DALR_anticod-bd"/>
</dbReference>
<dbReference type="InterPro" id="IPR014729">
    <property type="entry name" value="Rossmann-like_a/b/a_fold"/>
</dbReference>
<dbReference type="InterPro" id="IPR009080">
    <property type="entry name" value="tRNAsynth_Ia_anticodon-bd"/>
</dbReference>
<dbReference type="NCBIfam" id="TIGR00456">
    <property type="entry name" value="argS"/>
    <property type="match status" value="1"/>
</dbReference>
<dbReference type="PANTHER" id="PTHR11956:SF5">
    <property type="entry name" value="ARGININE--TRNA LIGASE, CYTOPLASMIC"/>
    <property type="match status" value="1"/>
</dbReference>
<dbReference type="PANTHER" id="PTHR11956">
    <property type="entry name" value="ARGINYL-TRNA SYNTHETASE"/>
    <property type="match status" value="1"/>
</dbReference>
<dbReference type="Pfam" id="PF03485">
    <property type="entry name" value="Arg_tRNA_synt_N"/>
    <property type="match status" value="1"/>
</dbReference>
<dbReference type="Pfam" id="PF05746">
    <property type="entry name" value="DALR_1"/>
    <property type="match status" value="1"/>
</dbReference>
<dbReference type="Pfam" id="PF00750">
    <property type="entry name" value="tRNA-synt_1d"/>
    <property type="match status" value="1"/>
</dbReference>
<dbReference type="PRINTS" id="PR01038">
    <property type="entry name" value="TRNASYNTHARG"/>
</dbReference>
<dbReference type="SMART" id="SM01016">
    <property type="entry name" value="Arg_tRNA_synt_N"/>
    <property type="match status" value="1"/>
</dbReference>
<dbReference type="SMART" id="SM00836">
    <property type="entry name" value="DALR_1"/>
    <property type="match status" value="1"/>
</dbReference>
<dbReference type="SUPFAM" id="SSF47323">
    <property type="entry name" value="Anticodon-binding domain of a subclass of class I aminoacyl-tRNA synthetases"/>
    <property type="match status" value="1"/>
</dbReference>
<dbReference type="SUPFAM" id="SSF55190">
    <property type="entry name" value="Arginyl-tRNA synthetase (ArgRS), N-terminal 'additional' domain"/>
    <property type="match status" value="1"/>
</dbReference>
<dbReference type="SUPFAM" id="SSF52374">
    <property type="entry name" value="Nucleotidylyl transferase"/>
    <property type="match status" value="1"/>
</dbReference>
<dbReference type="PROSITE" id="PS00178">
    <property type="entry name" value="AA_TRNA_LIGASE_I"/>
    <property type="match status" value="1"/>
</dbReference>
<sequence>MNIQVLLSDKVSQALIAAGAPADCEAQVRQSAKAQFGDYQANGVMSVAKKLGMPPRQLAEKVVQLLDLGDVASKVEIAGPGFINIFLNSQWVAQQADRVLSAPKLDIAPVKQQTIVIDYSAPNVAKEMHVGHLRSTIIGDAAARTQEFLGHKVIRANHVGDWGTQFGMLIAYLEKMQNENASDMGLSDLEQFYREAKKHYDEDADFAERARAYVVKLQGGDQYCLKMWRKLVDITMAQNQLTYNRLNVTLTEDDVMGESLYNAMLPGIVADLKAKGLAVESEGATVVFLDEYKNKDGEPMGVIIQKKDGGYLYTTTDIACAKYRYETLGADRVLYYIDSRQHQHLMQAWTIVRKAGYIPDSLSLEHHMFGMMLGKDGKPFKTRSGGTVKLSDLLDEAVDRAGKLIAEKNPDMPAEEMQSLANAVGIGAVKYADLSKSRTTDYIFDWDNMLAFEGNTAPYMQYAYTRVASVFKRAGVDESNLTLPLVMTEEREITLATRLLQFEEVITTVAREGTPHVMCSYLYDLAGLFSGFYEHCQILNADSEEARQSRLKLSLLTAKTLKVGLDTLGIETVERM</sequence>
<name>SYR_SERP5</name>
<organism>
    <name type="scientific">Serratia proteamaculans (strain 568)</name>
    <dbReference type="NCBI Taxonomy" id="399741"/>
    <lineage>
        <taxon>Bacteria</taxon>
        <taxon>Pseudomonadati</taxon>
        <taxon>Pseudomonadota</taxon>
        <taxon>Gammaproteobacteria</taxon>
        <taxon>Enterobacterales</taxon>
        <taxon>Yersiniaceae</taxon>
        <taxon>Serratia</taxon>
    </lineage>
</organism>
<keyword id="KW-0030">Aminoacyl-tRNA synthetase</keyword>
<keyword id="KW-0067">ATP-binding</keyword>
<keyword id="KW-0963">Cytoplasm</keyword>
<keyword id="KW-0436">Ligase</keyword>
<keyword id="KW-0547">Nucleotide-binding</keyword>
<keyword id="KW-0648">Protein biosynthesis</keyword>
<comment type="catalytic activity">
    <reaction evidence="1">
        <text>tRNA(Arg) + L-arginine + ATP = L-arginyl-tRNA(Arg) + AMP + diphosphate</text>
        <dbReference type="Rhea" id="RHEA:20301"/>
        <dbReference type="Rhea" id="RHEA-COMP:9658"/>
        <dbReference type="Rhea" id="RHEA-COMP:9673"/>
        <dbReference type="ChEBI" id="CHEBI:30616"/>
        <dbReference type="ChEBI" id="CHEBI:32682"/>
        <dbReference type="ChEBI" id="CHEBI:33019"/>
        <dbReference type="ChEBI" id="CHEBI:78442"/>
        <dbReference type="ChEBI" id="CHEBI:78513"/>
        <dbReference type="ChEBI" id="CHEBI:456215"/>
        <dbReference type="EC" id="6.1.1.19"/>
    </reaction>
</comment>
<comment type="subunit">
    <text evidence="1">Monomer.</text>
</comment>
<comment type="subcellular location">
    <subcellularLocation>
        <location evidence="1">Cytoplasm</location>
    </subcellularLocation>
</comment>
<comment type="similarity">
    <text evidence="1">Belongs to the class-I aminoacyl-tRNA synthetase family.</text>
</comment>